<accession>A8P488</accession>
<comment type="function">
    <text evidence="1">Lyase that catalyzes the C1-decarboxylation of 4-hydroxy-3-methoxy-5-(all-trans-polyprenyl)benzoic acid into 2-methoxy-6-(all-trans-polyprenyl)phenol during ubiquinone biosynthesis.</text>
</comment>
<comment type="catalytic activity">
    <reaction evidence="1">
        <text>a 4-hydroxy-3-methoxy-5-(all-trans-polyprenyl)benzoate + H(+) = a 2-methoxy-6-(all-trans-polyprenyl)phenol + CO2</text>
        <dbReference type="Rhea" id="RHEA:81179"/>
        <dbReference type="Rhea" id="RHEA-COMP:9551"/>
        <dbReference type="Rhea" id="RHEA-COMP:10931"/>
        <dbReference type="ChEBI" id="CHEBI:15378"/>
        <dbReference type="ChEBI" id="CHEBI:16526"/>
        <dbReference type="ChEBI" id="CHEBI:62731"/>
        <dbReference type="ChEBI" id="CHEBI:84443"/>
        <dbReference type="EC" id="4.1.1.130"/>
    </reaction>
</comment>
<comment type="cofactor">
    <cofactor evidence="1">
        <name>Zn(2+)</name>
        <dbReference type="ChEBI" id="CHEBI:29105"/>
    </cofactor>
</comment>
<comment type="pathway">
    <text evidence="1">Cofactor biosynthesis; ubiquinone biosynthesis.</text>
</comment>
<comment type="subunit">
    <text evidence="1">Component of a multi-subunit COQ enzyme complex, composed of at least COQ3, COQ4, COQ5, COQ6, COQ7 and COQ9.</text>
</comment>
<comment type="subcellular location">
    <subcellularLocation>
        <location evidence="1">Mitochondrion inner membrane</location>
        <topology evidence="1">Peripheral membrane protein</topology>
        <orientation evidence="1">Matrix side</orientation>
    </subcellularLocation>
</comment>
<comment type="similarity">
    <text evidence="1">Belongs to the COQ4 family.</text>
</comment>
<protein>
    <recommendedName>
        <fullName evidence="1">Ubiquinone biosynthesis protein COQ4, mitochondrial</fullName>
    </recommendedName>
    <alternativeName>
        <fullName>4-hydroxy-3-methoxy-5-polyprenylbenzoate decarboxylase</fullName>
        <ecNumber evidence="1">4.1.1.130</ecNumber>
    </alternativeName>
    <alternativeName>
        <fullName evidence="1">Coenzyme Q biosynthesis protein 4</fullName>
    </alternativeName>
</protein>
<keyword id="KW-0456">Lyase</keyword>
<keyword id="KW-0472">Membrane</keyword>
<keyword id="KW-0479">Metal-binding</keyword>
<keyword id="KW-0496">Mitochondrion</keyword>
<keyword id="KW-0999">Mitochondrion inner membrane</keyword>
<keyword id="KW-1185">Reference proteome</keyword>
<keyword id="KW-0809">Transit peptide</keyword>
<keyword id="KW-0831">Ubiquinone biosynthesis</keyword>
<keyword id="KW-0862">Zinc</keyword>
<proteinExistence type="inferred from homology"/>
<feature type="transit peptide" description="Mitochondrion" evidence="1">
    <location>
        <begin position="1"/>
        <end position="37"/>
    </location>
</feature>
<feature type="chain" id="PRO_0000388111" description="Ubiquinone biosynthesis protein COQ4, mitochondrial">
    <location>
        <begin position="38"/>
        <end position="291"/>
    </location>
</feature>
<feature type="region of interest" description="Disordered" evidence="2">
    <location>
        <begin position="271"/>
        <end position="291"/>
    </location>
</feature>
<feature type="compositionally biased region" description="Basic and acidic residues" evidence="2">
    <location>
        <begin position="271"/>
        <end position="283"/>
    </location>
</feature>
<feature type="binding site" evidence="1">
    <location>
        <position position="169"/>
    </location>
    <ligand>
        <name>Zn(2+)</name>
        <dbReference type="ChEBI" id="CHEBI:29105"/>
    </ligand>
</feature>
<feature type="binding site" evidence="1">
    <location>
        <position position="170"/>
    </location>
    <ligand>
        <name>Zn(2+)</name>
        <dbReference type="ChEBI" id="CHEBI:29105"/>
    </ligand>
</feature>
<feature type="binding site" evidence="1">
    <location>
        <position position="173"/>
    </location>
    <ligand>
        <name>Zn(2+)</name>
        <dbReference type="ChEBI" id="CHEBI:29105"/>
    </ligand>
</feature>
<feature type="binding site" evidence="1">
    <location>
        <position position="185"/>
    </location>
    <ligand>
        <name>Zn(2+)</name>
        <dbReference type="ChEBI" id="CHEBI:29105"/>
    </ligand>
</feature>
<name>COQ4_COPC7</name>
<evidence type="ECO:0000255" key="1">
    <source>
        <dbReference type="HAMAP-Rule" id="MF_03111"/>
    </source>
</evidence>
<evidence type="ECO:0000256" key="2">
    <source>
        <dbReference type="SAM" id="MobiDB-lite"/>
    </source>
</evidence>
<sequence>MLGRRSVSLLRGLTELPVSSRAHTALRALSVPQTRRNVATKPNYEGHIPLNWFENALLTAGAAYMSITDPRRGDMVAALGETTAGPTVSWLRDQMLASPEGRQILKDRPRITSSTVDMDKLAQMPEGTFGRAYINWLERCGVTPDTREPVHYIDDPELAYVMQRYRECHDFYHCICNMPVNVESELAVKYFEFANLGLPMAGLAALFGPLRLNAQKRNWLFTEAVPWALKCGSSARSLITVYWEKRWEEQVEDMKKEFGIWDGPEARWSKPLNEAKEAAERRSKTTQNQIY</sequence>
<reference key="1">
    <citation type="journal article" date="2010" name="Proc. Natl. Acad. Sci. U.S.A.">
        <title>Insights into evolution of multicellular fungi from the assembled chromosomes of the mushroom Coprinopsis cinerea (Coprinus cinereus).</title>
        <authorList>
            <person name="Stajich J.E."/>
            <person name="Wilke S.K."/>
            <person name="Ahren D."/>
            <person name="Au C.H."/>
            <person name="Birren B.W."/>
            <person name="Borodovsky M."/>
            <person name="Burns C."/>
            <person name="Canbaeck B."/>
            <person name="Casselton L.A."/>
            <person name="Cheng C.K."/>
            <person name="Deng J."/>
            <person name="Dietrich F.S."/>
            <person name="Fargo D.C."/>
            <person name="Farman M.L."/>
            <person name="Gathman A.C."/>
            <person name="Goldberg J."/>
            <person name="Guigo R."/>
            <person name="Hoegger P.J."/>
            <person name="Hooker J.B."/>
            <person name="Huggins A."/>
            <person name="James T.Y."/>
            <person name="Kamada T."/>
            <person name="Kilaru S."/>
            <person name="Kodira C."/>
            <person name="Kuees U."/>
            <person name="Kupfer D."/>
            <person name="Kwan H.S."/>
            <person name="Lomsadze A."/>
            <person name="Li W."/>
            <person name="Lilly W.W."/>
            <person name="Ma L.-J."/>
            <person name="Mackey A.J."/>
            <person name="Manning G."/>
            <person name="Martin F."/>
            <person name="Muraguchi H."/>
            <person name="Natvig D.O."/>
            <person name="Palmerini H."/>
            <person name="Ramesh M.A."/>
            <person name="Rehmeyer C.J."/>
            <person name="Roe B.A."/>
            <person name="Shenoy N."/>
            <person name="Stanke M."/>
            <person name="Ter-Hovhannisyan V."/>
            <person name="Tunlid A."/>
            <person name="Velagapudi R."/>
            <person name="Vision T.J."/>
            <person name="Zeng Q."/>
            <person name="Zolan M.E."/>
            <person name="Pukkila P.J."/>
        </authorList>
    </citation>
    <scope>NUCLEOTIDE SEQUENCE [LARGE SCALE GENOMIC DNA]</scope>
    <source>
        <strain>Okayama-7 / 130 / ATCC MYA-4618 / FGSC 9003</strain>
    </source>
</reference>
<organism>
    <name type="scientific">Coprinopsis cinerea (strain Okayama-7 / 130 / ATCC MYA-4618 / FGSC 9003)</name>
    <name type="common">Inky cap fungus</name>
    <name type="synonym">Hormographiella aspergillata</name>
    <dbReference type="NCBI Taxonomy" id="240176"/>
    <lineage>
        <taxon>Eukaryota</taxon>
        <taxon>Fungi</taxon>
        <taxon>Dikarya</taxon>
        <taxon>Basidiomycota</taxon>
        <taxon>Agaricomycotina</taxon>
        <taxon>Agaricomycetes</taxon>
        <taxon>Agaricomycetidae</taxon>
        <taxon>Agaricales</taxon>
        <taxon>Agaricineae</taxon>
        <taxon>Psathyrellaceae</taxon>
        <taxon>Coprinopsis</taxon>
    </lineage>
</organism>
<gene>
    <name evidence="1" type="primary">COQ4</name>
    <name type="ORF">CC1G_11644</name>
</gene>
<dbReference type="EC" id="4.1.1.130" evidence="1"/>
<dbReference type="EMBL" id="AACS02000004">
    <property type="protein sequence ID" value="EAU83118.2"/>
    <property type="molecule type" value="Genomic_DNA"/>
</dbReference>
<dbReference type="RefSeq" id="XP_001838701.2">
    <property type="nucleotide sequence ID" value="XM_001838649.2"/>
</dbReference>
<dbReference type="SMR" id="A8P488"/>
<dbReference type="FunCoup" id="A8P488">
    <property type="interactions" value="317"/>
</dbReference>
<dbReference type="STRING" id="240176.A8P488"/>
<dbReference type="GeneID" id="6015294"/>
<dbReference type="KEGG" id="cci:CC1G_11644"/>
<dbReference type="VEuPathDB" id="FungiDB:CC1G_11644"/>
<dbReference type="eggNOG" id="KOG3244">
    <property type="taxonomic scope" value="Eukaryota"/>
</dbReference>
<dbReference type="HOGENOM" id="CLU_061241_0_1_1"/>
<dbReference type="InParanoid" id="A8P488"/>
<dbReference type="OMA" id="YYERHFH"/>
<dbReference type="OrthoDB" id="4249at2759"/>
<dbReference type="UniPathway" id="UPA00232"/>
<dbReference type="Proteomes" id="UP000001861">
    <property type="component" value="Unassembled WGS sequence"/>
</dbReference>
<dbReference type="GO" id="GO:0031314">
    <property type="term" value="C:extrinsic component of mitochondrial inner membrane"/>
    <property type="evidence" value="ECO:0007669"/>
    <property type="project" value="UniProtKB-UniRule"/>
</dbReference>
<dbReference type="GO" id="GO:0006744">
    <property type="term" value="P:ubiquinone biosynthetic process"/>
    <property type="evidence" value="ECO:0007669"/>
    <property type="project" value="UniProtKB-UniRule"/>
</dbReference>
<dbReference type="HAMAP" id="MF_03111">
    <property type="entry name" value="Coq4"/>
    <property type="match status" value="1"/>
</dbReference>
<dbReference type="InterPro" id="IPR007715">
    <property type="entry name" value="Coq4"/>
</dbReference>
<dbReference type="InterPro" id="IPR027540">
    <property type="entry name" value="Coq4_euk"/>
</dbReference>
<dbReference type="PANTHER" id="PTHR12922">
    <property type="entry name" value="UBIQUINONE BIOSYNTHESIS PROTEIN"/>
    <property type="match status" value="1"/>
</dbReference>
<dbReference type="PANTHER" id="PTHR12922:SF7">
    <property type="entry name" value="UBIQUINONE BIOSYNTHESIS PROTEIN COQ4 HOMOLOG, MITOCHONDRIAL"/>
    <property type="match status" value="1"/>
</dbReference>
<dbReference type="Pfam" id="PF05019">
    <property type="entry name" value="Coq4"/>
    <property type="match status" value="1"/>
</dbReference>